<feature type="chain" id="PRO_1000123025" description="Elongation factor P">
    <location>
        <begin position="1"/>
        <end position="188"/>
    </location>
</feature>
<feature type="modified residue" description="N6-(3,6-diaminohexanoyl)-5-hydroxylysine" evidence="1">
    <location>
        <position position="34"/>
    </location>
</feature>
<proteinExistence type="inferred from homology"/>
<keyword id="KW-0963">Cytoplasm</keyword>
<keyword id="KW-0251">Elongation factor</keyword>
<keyword id="KW-0379">Hydroxylation</keyword>
<keyword id="KW-0648">Protein biosynthesis</keyword>
<organism>
    <name type="scientific">Salmonella paratyphi C (strain RKS4594)</name>
    <dbReference type="NCBI Taxonomy" id="476213"/>
    <lineage>
        <taxon>Bacteria</taxon>
        <taxon>Pseudomonadati</taxon>
        <taxon>Pseudomonadota</taxon>
        <taxon>Gammaproteobacteria</taxon>
        <taxon>Enterobacterales</taxon>
        <taxon>Enterobacteriaceae</taxon>
        <taxon>Salmonella</taxon>
    </lineage>
</organism>
<evidence type="ECO:0000255" key="1">
    <source>
        <dbReference type="HAMAP-Rule" id="MF_00141"/>
    </source>
</evidence>
<sequence length="188" mass="20623">MATYYSNDFRSGLKIMLDGEPYAVESSEFVKPGKGQAFARVKLRRLLTGTRVEKTFKSTDSAEGADVVDMNLTYLYNDGEFWHFMNNETFEQLSADAKAIGDNAKWLLDQAECIVTLWNGQPISVTPPNFVELEIVDTDPGLKGDTAGTGGKPATLSTGAVVKVPLFVQIGEVIKVDTRSGEYVSRVK</sequence>
<comment type="function">
    <text evidence="1">Involved in peptide bond synthesis. Alleviates ribosome stalling that occurs when 3 or more consecutive Pro residues or the sequence PPG is present in a protein, possibly by augmenting the peptidyl transferase activity of the ribosome. Modification of Lys-34 is required for alleviation.</text>
</comment>
<comment type="pathway">
    <text evidence="1">Protein biosynthesis; polypeptide chain elongation.</text>
</comment>
<comment type="subcellular location">
    <subcellularLocation>
        <location evidence="1">Cytoplasm</location>
    </subcellularLocation>
</comment>
<comment type="PTM">
    <text evidence="1">Is beta-lysylated on the epsilon-amino group of Lys-34 by the combined action of EpmA and EpmB, and then hydroxylated on the C5 position of the same residue by EpmC. Lysylation is critical for the stimulatory effect of EF-P on peptide-bond formation. The lysylation moiety would extend toward the peptidyltransferase center and stabilize the terminal 3-CCA end of the tRNA. The hydroxylation of the C5 position on Lys-34 would allow additional potential stabilizing hydrogen-bond interactions with the P-tRNA.</text>
</comment>
<comment type="similarity">
    <text evidence="1">Belongs to the elongation factor P family.</text>
</comment>
<gene>
    <name evidence="1" type="primary">efp</name>
    <name type="ordered locus">SPC_4484</name>
</gene>
<dbReference type="EMBL" id="CP000857">
    <property type="protein sequence ID" value="ACN48536.1"/>
    <property type="molecule type" value="Genomic_DNA"/>
</dbReference>
<dbReference type="RefSeq" id="WP_000257282.1">
    <property type="nucleotide sequence ID" value="NC_012125.1"/>
</dbReference>
<dbReference type="SMR" id="C0Q6A6"/>
<dbReference type="GeneID" id="66758562"/>
<dbReference type="KEGG" id="sei:SPC_4484"/>
<dbReference type="HOGENOM" id="CLU_074944_0_0_6"/>
<dbReference type="UniPathway" id="UPA00345"/>
<dbReference type="Proteomes" id="UP000001599">
    <property type="component" value="Chromosome"/>
</dbReference>
<dbReference type="GO" id="GO:0005829">
    <property type="term" value="C:cytosol"/>
    <property type="evidence" value="ECO:0007669"/>
    <property type="project" value="UniProtKB-ARBA"/>
</dbReference>
<dbReference type="GO" id="GO:0003746">
    <property type="term" value="F:translation elongation factor activity"/>
    <property type="evidence" value="ECO:0007669"/>
    <property type="project" value="UniProtKB-UniRule"/>
</dbReference>
<dbReference type="GO" id="GO:0043043">
    <property type="term" value="P:peptide biosynthetic process"/>
    <property type="evidence" value="ECO:0007669"/>
    <property type="project" value="InterPro"/>
</dbReference>
<dbReference type="CDD" id="cd04470">
    <property type="entry name" value="S1_EF-P_repeat_1"/>
    <property type="match status" value="1"/>
</dbReference>
<dbReference type="CDD" id="cd05794">
    <property type="entry name" value="S1_EF-P_repeat_2"/>
    <property type="match status" value="1"/>
</dbReference>
<dbReference type="FunFam" id="2.30.30.30:FF:000003">
    <property type="entry name" value="Elongation factor P"/>
    <property type="match status" value="1"/>
</dbReference>
<dbReference type="FunFam" id="2.40.50.140:FF:000004">
    <property type="entry name" value="Elongation factor P"/>
    <property type="match status" value="1"/>
</dbReference>
<dbReference type="FunFam" id="2.40.50.140:FF:000009">
    <property type="entry name" value="Elongation factor P"/>
    <property type="match status" value="1"/>
</dbReference>
<dbReference type="Gene3D" id="2.30.30.30">
    <property type="match status" value="1"/>
</dbReference>
<dbReference type="Gene3D" id="2.40.50.140">
    <property type="entry name" value="Nucleic acid-binding proteins"/>
    <property type="match status" value="2"/>
</dbReference>
<dbReference type="HAMAP" id="MF_00141">
    <property type="entry name" value="EF_P"/>
    <property type="match status" value="1"/>
</dbReference>
<dbReference type="InterPro" id="IPR015365">
    <property type="entry name" value="Elong-fact-P_C"/>
</dbReference>
<dbReference type="InterPro" id="IPR012340">
    <property type="entry name" value="NA-bd_OB-fold"/>
</dbReference>
<dbReference type="InterPro" id="IPR014722">
    <property type="entry name" value="Rib_uL2_dom2"/>
</dbReference>
<dbReference type="InterPro" id="IPR020599">
    <property type="entry name" value="Transl_elong_fac_P/YeiP"/>
</dbReference>
<dbReference type="InterPro" id="IPR013185">
    <property type="entry name" value="Transl_elong_KOW-like"/>
</dbReference>
<dbReference type="InterPro" id="IPR001059">
    <property type="entry name" value="Transl_elong_P/YeiP_cen"/>
</dbReference>
<dbReference type="InterPro" id="IPR013852">
    <property type="entry name" value="Transl_elong_P/YeiP_CS"/>
</dbReference>
<dbReference type="InterPro" id="IPR011768">
    <property type="entry name" value="Transl_elongation_fac_P"/>
</dbReference>
<dbReference type="InterPro" id="IPR008991">
    <property type="entry name" value="Translation_prot_SH3-like_sf"/>
</dbReference>
<dbReference type="NCBIfam" id="TIGR00038">
    <property type="entry name" value="efp"/>
    <property type="match status" value="1"/>
</dbReference>
<dbReference type="NCBIfam" id="NF001810">
    <property type="entry name" value="PRK00529.1"/>
    <property type="match status" value="1"/>
</dbReference>
<dbReference type="PANTHER" id="PTHR30053">
    <property type="entry name" value="ELONGATION FACTOR P"/>
    <property type="match status" value="1"/>
</dbReference>
<dbReference type="PANTHER" id="PTHR30053:SF12">
    <property type="entry name" value="ELONGATION FACTOR P (EF-P) FAMILY PROTEIN"/>
    <property type="match status" value="1"/>
</dbReference>
<dbReference type="Pfam" id="PF01132">
    <property type="entry name" value="EFP"/>
    <property type="match status" value="1"/>
</dbReference>
<dbReference type="Pfam" id="PF08207">
    <property type="entry name" value="EFP_N"/>
    <property type="match status" value="1"/>
</dbReference>
<dbReference type="Pfam" id="PF09285">
    <property type="entry name" value="Elong-fact-P_C"/>
    <property type="match status" value="1"/>
</dbReference>
<dbReference type="PIRSF" id="PIRSF005901">
    <property type="entry name" value="EF-P"/>
    <property type="match status" value="1"/>
</dbReference>
<dbReference type="SMART" id="SM01185">
    <property type="entry name" value="EFP"/>
    <property type="match status" value="1"/>
</dbReference>
<dbReference type="SMART" id="SM00841">
    <property type="entry name" value="Elong-fact-P_C"/>
    <property type="match status" value="1"/>
</dbReference>
<dbReference type="SUPFAM" id="SSF50249">
    <property type="entry name" value="Nucleic acid-binding proteins"/>
    <property type="match status" value="2"/>
</dbReference>
<dbReference type="SUPFAM" id="SSF50104">
    <property type="entry name" value="Translation proteins SH3-like domain"/>
    <property type="match status" value="1"/>
</dbReference>
<dbReference type="PROSITE" id="PS01275">
    <property type="entry name" value="EFP"/>
    <property type="match status" value="1"/>
</dbReference>
<protein>
    <recommendedName>
        <fullName evidence="1">Elongation factor P</fullName>
        <shortName evidence="1">EF-P</shortName>
    </recommendedName>
</protein>
<name>EFP_SALPC</name>
<accession>C0Q6A6</accession>
<reference key="1">
    <citation type="journal article" date="2009" name="PLoS ONE">
        <title>Salmonella paratyphi C: genetic divergence from Salmonella choleraesuis and pathogenic convergence with Salmonella typhi.</title>
        <authorList>
            <person name="Liu W.-Q."/>
            <person name="Feng Y."/>
            <person name="Wang Y."/>
            <person name="Zou Q.-H."/>
            <person name="Chen F."/>
            <person name="Guo J.-T."/>
            <person name="Peng Y.-H."/>
            <person name="Jin Y."/>
            <person name="Li Y.-G."/>
            <person name="Hu S.-N."/>
            <person name="Johnston R.N."/>
            <person name="Liu G.-R."/>
            <person name="Liu S.-L."/>
        </authorList>
    </citation>
    <scope>NUCLEOTIDE SEQUENCE [LARGE SCALE GENOMIC DNA]</scope>
    <source>
        <strain>RKS4594</strain>
    </source>
</reference>